<proteinExistence type="inferred from homology"/>
<feature type="chain" id="PRO_0000167553" description="Ribosome-recycling factor">
    <location>
        <begin position="1"/>
        <end position="185"/>
    </location>
</feature>
<accession>Q8DQ49</accession>
<sequence length="185" mass="20643">MANVIIEKAKERMTQSHQSLAREFGGIRAGRANASLLDRVHVEYYGVETPLNQIASITIPEARVLLVTPFDKSSLKDIDRALNASDLGITPANDGSVIRLVIPALTEETRRDLAKEVKKVGENAKVAVRNIRRDAMDEAKKQEKAKEITEDELKTLEKDIQKVTDDAVKHIDDMTANKEKELLEV</sequence>
<dbReference type="EMBL" id="AE007317">
    <property type="protein sequence ID" value="AAK99650.1"/>
    <property type="molecule type" value="Genomic_DNA"/>
</dbReference>
<dbReference type="PIR" id="F97977">
    <property type="entry name" value="F97977"/>
</dbReference>
<dbReference type="RefSeq" id="NP_358440.1">
    <property type="nucleotide sequence ID" value="NC_003098.1"/>
</dbReference>
<dbReference type="RefSeq" id="WP_000024408.1">
    <property type="nucleotide sequence ID" value="NC_003098.1"/>
</dbReference>
<dbReference type="SMR" id="Q8DQ49"/>
<dbReference type="STRING" id="171101.spr0846"/>
<dbReference type="KEGG" id="spr:spr0846"/>
<dbReference type="PATRIC" id="fig|171101.6.peg.934"/>
<dbReference type="eggNOG" id="COG0233">
    <property type="taxonomic scope" value="Bacteria"/>
</dbReference>
<dbReference type="HOGENOM" id="CLU_073981_2_0_9"/>
<dbReference type="Proteomes" id="UP000000586">
    <property type="component" value="Chromosome"/>
</dbReference>
<dbReference type="GO" id="GO:0005737">
    <property type="term" value="C:cytoplasm"/>
    <property type="evidence" value="ECO:0007669"/>
    <property type="project" value="UniProtKB-SubCell"/>
</dbReference>
<dbReference type="GO" id="GO:0043023">
    <property type="term" value="F:ribosomal large subunit binding"/>
    <property type="evidence" value="ECO:0000318"/>
    <property type="project" value="GO_Central"/>
</dbReference>
<dbReference type="GO" id="GO:0006412">
    <property type="term" value="P:translation"/>
    <property type="evidence" value="ECO:0000318"/>
    <property type="project" value="GO_Central"/>
</dbReference>
<dbReference type="GO" id="GO:0006415">
    <property type="term" value="P:translational termination"/>
    <property type="evidence" value="ECO:0007669"/>
    <property type="project" value="UniProtKB-UniRule"/>
</dbReference>
<dbReference type="CDD" id="cd00520">
    <property type="entry name" value="RRF"/>
    <property type="match status" value="1"/>
</dbReference>
<dbReference type="FunFam" id="1.10.132.20:FF:000001">
    <property type="entry name" value="Ribosome-recycling factor"/>
    <property type="match status" value="1"/>
</dbReference>
<dbReference type="FunFam" id="3.30.1360.40:FF:000001">
    <property type="entry name" value="Ribosome-recycling factor"/>
    <property type="match status" value="1"/>
</dbReference>
<dbReference type="Gene3D" id="3.30.1360.40">
    <property type="match status" value="1"/>
</dbReference>
<dbReference type="Gene3D" id="1.10.132.20">
    <property type="entry name" value="Ribosome-recycling factor"/>
    <property type="match status" value="1"/>
</dbReference>
<dbReference type="HAMAP" id="MF_00040">
    <property type="entry name" value="RRF"/>
    <property type="match status" value="1"/>
</dbReference>
<dbReference type="InterPro" id="IPR002661">
    <property type="entry name" value="Ribosome_recyc_fac"/>
</dbReference>
<dbReference type="InterPro" id="IPR023584">
    <property type="entry name" value="Ribosome_recyc_fac_dom"/>
</dbReference>
<dbReference type="InterPro" id="IPR036191">
    <property type="entry name" value="RRF_sf"/>
</dbReference>
<dbReference type="NCBIfam" id="TIGR00496">
    <property type="entry name" value="frr"/>
    <property type="match status" value="1"/>
</dbReference>
<dbReference type="PANTHER" id="PTHR20982:SF3">
    <property type="entry name" value="MITOCHONDRIAL RIBOSOME RECYCLING FACTOR PSEUDO 1"/>
    <property type="match status" value="1"/>
</dbReference>
<dbReference type="PANTHER" id="PTHR20982">
    <property type="entry name" value="RIBOSOME RECYCLING FACTOR"/>
    <property type="match status" value="1"/>
</dbReference>
<dbReference type="Pfam" id="PF01765">
    <property type="entry name" value="RRF"/>
    <property type="match status" value="1"/>
</dbReference>
<dbReference type="SUPFAM" id="SSF55194">
    <property type="entry name" value="Ribosome recycling factor, RRF"/>
    <property type="match status" value="1"/>
</dbReference>
<reference key="1">
    <citation type="journal article" date="2001" name="J. Bacteriol.">
        <title>Genome of the bacterium Streptococcus pneumoniae strain R6.</title>
        <authorList>
            <person name="Hoskins J."/>
            <person name="Alborn W.E. Jr."/>
            <person name="Arnold J."/>
            <person name="Blaszczak L.C."/>
            <person name="Burgett S."/>
            <person name="DeHoff B.S."/>
            <person name="Estrem S.T."/>
            <person name="Fritz L."/>
            <person name="Fu D.-J."/>
            <person name="Fuller W."/>
            <person name="Geringer C."/>
            <person name="Gilmour R."/>
            <person name="Glass J.S."/>
            <person name="Khoja H."/>
            <person name="Kraft A.R."/>
            <person name="Lagace R.E."/>
            <person name="LeBlanc D.J."/>
            <person name="Lee L.N."/>
            <person name="Lefkowitz E.J."/>
            <person name="Lu J."/>
            <person name="Matsushima P."/>
            <person name="McAhren S.M."/>
            <person name="McHenney M."/>
            <person name="McLeaster K."/>
            <person name="Mundy C.W."/>
            <person name="Nicas T.I."/>
            <person name="Norris F.H."/>
            <person name="O'Gara M."/>
            <person name="Peery R.B."/>
            <person name="Robertson G.T."/>
            <person name="Rockey P."/>
            <person name="Sun P.-M."/>
            <person name="Winkler M.E."/>
            <person name="Yang Y."/>
            <person name="Young-Bellido M."/>
            <person name="Zhao G."/>
            <person name="Zook C.A."/>
            <person name="Baltz R.H."/>
            <person name="Jaskunas S.R."/>
            <person name="Rosteck P.R. Jr."/>
            <person name="Skatrud P.L."/>
            <person name="Glass J.I."/>
        </authorList>
    </citation>
    <scope>NUCLEOTIDE SEQUENCE [LARGE SCALE GENOMIC DNA]</scope>
    <source>
        <strain>ATCC BAA-255 / R6</strain>
    </source>
</reference>
<keyword id="KW-0963">Cytoplasm</keyword>
<keyword id="KW-0648">Protein biosynthesis</keyword>
<keyword id="KW-1185">Reference proteome</keyword>
<comment type="function">
    <text evidence="1">Responsible for the release of ribosomes from messenger RNA at the termination of protein biosynthesis. May increase the efficiency of translation by recycling ribosomes from one round of translation to another.</text>
</comment>
<comment type="subcellular location">
    <subcellularLocation>
        <location evidence="1">Cytoplasm</location>
    </subcellularLocation>
</comment>
<comment type="similarity">
    <text evidence="1">Belongs to the RRF family.</text>
</comment>
<name>RRF_STRR6</name>
<gene>
    <name evidence="1" type="primary">frr</name>
    <name type="ordered locus">spr0846</name>
</gene>
<evidence type="ECO:0000255" key="1">
    <source>
        <dbReference type="HAMAP-Rule" id="MF_00040"/>
    </source>
</evidence>
<organism>
    <name type="scientific">Streptococcus pneumoniae (strain ATCC BAA-255 / R6)</name>
    <dbReference type="NCBI Taxonomy" id="171101"/>
    <lineage>
        <taxon>Bacteria</taxon>
        <taxon>Bacillati</taxon>
        <taxon>Bacillota</taxon>
        <taxon>Bacilli</taxon>
        <taxon>Lactobacillales</taxon>
        <taxon>Streptococcaceae</taxon>
        <taxon>Streptococcus</taxon>
    </lineage>
</organism>
<protein>
    <recommendedName>
        <fullName evidence="1">Ribosome-recycling factor</fullName>
        <shortName evidence="1">RRF</shortName>
    </recommendedName>
    <alternativeName>
        <fullName evidence="1">Ribosome-releasing factor</fullName>
    </alternativeName>
</protein>